<protein>
    <recommendedName>
        <fullName evidence="1">Putative pre-16S rRNA nuclease</fullName>
        <ecNumber evidence="1">3.1.-.-</ecNumber>
    </recommendedName>
</protein>
<evidence type="ECO:0000255" key="1">
    <source>
        <dbReference type="HAMAP-Rule" id="MF_00651"/>
    </source>
</evidence>
<reference key="1">
    <citation type="journal article" date="2009" name="PLoS Genet.">
        <title>Organised genome dynamics in the Escherichia coli species results in highly diverse adaptive paths.</title>
        <authorList>
            <person name="Touchon M."/>
            <person name="Hoede C."/>
            <person name="Tenaillon O."/>
            <person name="Barbe V."/>
            <person name="Baeriswyl S."/>
            <person name="Bidet P."/>
            <person name="Bingen E."/>
            <person name="Bonacorsi S."/>
            <person name="Bouchier C."/>
            <person name="Bouvet O."/>
            <person name="Calteau A."/>
            <person name="Chiapello H."/>
            <person name="Clermont O."/>
            <person name="Cruveiller S."/>
            <person name="Danchin A."/>
            <person name="Diard M."/>
            <person name="Dossat C."/>
            <person name="Karoui M.E."/>
            <person name="Frapy E."/>
            <person name="Garry L."/>
            <person name="Ghigo J.M."/>
            <person name="Gilles A.M."/>
            <person name="Johnson J."/>
            <person name="Le Bouguenec C."/>
            <person name="Lescat M."/>
            <person name="Mangenot S."/>
            <person name="Martinez-Jehanne V."/>
            <person name="Matic I."/>
            <person name="Nassif X."/>
            <person name="Oztas S."/>
            <person name="Petit M.A."/>
            <person name="Pichon C."/>
            <person name="Rouy Z."/>
            <person name="Ruf C.S."/>
            <person name="Schneider D."/>
            <person name="Tourret J."/>
            <person name="Vacherie B."/>
            <person name="Vallenet D."/>
            <person name="Medigue C."/>
            <person name="Rocha E.P.C."/>
            <person name="Denamur E."/>
        </authorList>
    </citation>
    <scope>NUCLEOTIDE SEQUENCE [LARGE SCALE GENOMIC DNA]</scope>
    <source>
        <strain>ED1a</strain>
    </source>
</reference>
<name>YQGF_ECO81</name>
<dbReference type="EC" id="3.1.-.-" evidence="1"/>
<dbReference type="EMBL" id="CU928162">
    <property type="protein sequence ID" value="CAR09566.2"/>
    <property type="molecule type" value="Genomic_DNA"/>
</dbReference>
<dbReference type="SMR" id="B7MZP8"/>
<dbReference type="KEGG" id="ecq:ECED1_3412"/>
<dbReference type="HOGENOM" id="CLU_098240_3_0_6"/>
<dbReference type="Proteomes" id="UP000000748">
    <property type="component" value="Chromosome"/>
</dbReference>
<dbReference type="GO" id="GO:0005829">
    <property type="term" value="C:cytosol"/>
    <property type="evidence" value="ECO:0007669"/>
    <property type="project" value="TreeGrafter"/>
</dbReference>
<dbReference type="GO" id="GO:0004518">
    <property type="term" value="F:nuclease activity"/>
    <property type="evidence" value="ECO:0007669"/>
    <property type="project" value="UniProtKB-KW"/>
</dbReference>
<dbReference type="GO" id="GO:0000967">
    <property type="term" value="P:rRNA 5'-end processing"/>
    <property type="evidence" value="ECO:0007669"/>
    <property type="project" value="UniProtKB-UniRule"/>
</dbReference>
<dbReference type="CDD" id="cd16964">
    <property type="entry name" value="YqgF"/>
    <property type="match status" value="1"/>
</dbReference>
<dbReference type="FunFam" id="3.30.420.140:FF:000002">
    <property type="entry name" value="Putative pre-16S rRNA nuclease"/>
    <property type="match status" value="1"/>
</dbReference>
<dbReference type="Gene3D" id="3.30.420.140">
    <property type="entry name" value="YqgF/RNase H-like domain"/>
    <property type="match status" value="1"/>
</dbReference>
<dbReference type="HAMAP" id="MF_00651">
    <property type="entry name" value="Nuclease_YqgF"/>
    <property type="match status" value="1"/>
</dbReference>
<dbReference type="InterPro" id="IPR012337">
    <property type="entry name" value="RNaseH-like_sf"/>
</dbReference>
<dbReference type="InterPro" id="IPR005227">
    <property type="entry name" value="YqgF"/>
</dbReference>
<dbReference type="InterPro" id="IPR006641">
    <property type="entry name" value="YqgF/RNaseH-like_dom"/>
</dbReference>
<dbReference type="InterPro" id="IPR037027">
    <property type="entry name" value="YqgF/RNaseH-like_dom_sf"/>
</dbReference>
<dbReference type="NCBIfam" id="TIGR00250">
    <property type="entry name" value="RNAse_H_YqgF"/>
    <property type="match status" value="1"/>
</dbReference>
<dbReference type="PANTHER" id="PTHR33317">
    <property type="entry name" value="POLYNUCLEOTIDYL TRANSFERASE, RIBONUCLEASE H-LIKE SUPERFAMILY PROTEIN"/>
    <property type="match status" value="1"/>
</dbReference>
<dbReference type="PANTHER" id="PTHR33317:SF4">
    <property type="entry name" value="POLYNUCLEOTIDYL TRANSFERASE, RIBONUCLEASE H-LIKE SUPERFAMILY PROTEIN"/>
    <property type="match status" value="1"/>
</dbReference>
<dbReference type="Pfam" id="PF03652">
    <property type="entry name" value="RuvX"/>
    <property type="match status" value="1"/>
</dbReference>
<dbReference type="SMART" id="SM00732">
    <property type="entry name" value="YqgFc"/>
    <property type="match status" value="1"/>
</dbReference>
<dbReference type="SUPFAM" id="SSF53098">
    <property type="entry name" value="Ribonuclease H-like"/>
    <property type="match status" value="1"/>
</dbReference>
<proteinExistence type="inferred from homology"/>
<feature type="chain" id="PRO_1000147481" description="Putative pre-16S rRNA nuclease">
    <location>
        <begin position="1"/>
        <end position="138"/>
    </location>
</feature>
<gene>
    <name evidence="1" type="primary">yqgF</name>
    <name type="ordered locus">ECED1_3412</name>
</gene>
<organism>
    <name type="scientific">Escherichia coli O81 (strain ED1a)</name>
    <dbReference type="NCBI Taxonomy" id="585397"/>
    <lineage>
        <taxon>Bacteria</taxon>
        <taxon>Pseudomonadati</taxon>
        <taxon>Pseudomonadota</taxon>
        <taxon>Gammaproteobacteria</taxon>
        <taxon>Enterobacterales</taxon>
        <taxon>Enterobacteriaceae</taxon>
        <taxon>Escherichia</taxon>
    </lineage>
</organism>
<sequence>MSGTLLAFDFGTKSIGVAVGQRITGTARPLPAIKAQDGTPDWNIIERLLKEWQPDEIIVGLPLNMDGTEQPLTARARKFANRIHGRFGVEVKLHDERLSTVEARSGLFEQGGYRALNKGKVDSASAVIILESYFEQGY</sequence>
<comment type="function">
    <text evidence="1">Could be a nuclease involved in processing of the 5'-end of pre-16S rRNA.</text>
</comment>
<comment type="subcellular location">
    <subcellularLocation>
        <location evidence="1">Cytoplasm</location>
    </subcellularLocation>
</comment>
<comment type="similarity">
    <text evidence="1">Belongs to the YqgF nuclease family.</text>
</comment>
<accession>B7MZP8</accession>
<keyword id="KW-0963">Cytoplasm</keyword>
<keyword id="KW-0378">Hydrolase</keyword>
<keyword id="KW-0540">Nuclease</keyword>
<keyword id="KW-0690">Ribosome biogenesis</keyword>